<sequence>MADAAAPDAASVRNFTINFGPQHPAAHGVLRLVLELDGEVVERVDPHIGLLHRGTEKLIEQKTYLQAIPYFDRLDYVAPMNQEHAFCLAVEKLLGIAVPRRAQLIRVLYAEIGRILSHLLNVTTQAMDVGALTPPLWGFEEREKLMMFYERASGSRMHAAYFRVGGVHQDLPPKLVDDIDAWCDAFPAVVNDLDRLLSDNRIFKQRNVDIGVVTLDQAWSWGFSGVMVRGSGAAWDLRKSQPYECYAELDFEVPIGKNGDCYDRYHIRMEEMRQSVRIMKQCIAKLRAPHGQGPVVVDDHKIFPPRRGEMKRSMEALIHHFKLYTEGFHVPAGEVYVAVEAPKGEFGVYLVSDGSNKPYKCKIRAPGFAHLQAMDFLSRGHLLADVSAILGSLDIVFGEVDR</sequence>
<feature type="chain" id="PRO_0000357903" description="NADH-quinone oxidoreductase subunit D">
    <location>
        <begin position="1"/>
        <end position="402"/>
    </location>
</feature>
<proteinExistence type="inferred from homology"/>
<organism>
    <name type="scientific">Rhodopseudomonas palustris (strain ATCC BAA-98 / CGA009)</name>
    <dbReference type="NCBI Taxonomy" id="258594"/>
    <lineage>
        <taxon>Bacteria</taxon>
        <taxon>Pseudomonadati</taxon>
        <taxon>Pseudomonadota</taxon>
        <taxon>Alphaproteobacteria</taxon>
        <taxon>Hyphomicrobiales</taxon>
        <taxon>Nitrobacteraceae</taxon>
        <taxon>Rhodopseudomonas</taxon>
    </lineage>
</organism>
<evidence type="ECO:0000255" key="1">
    <source>
        <dbReference type="HAMAP-Rule" id="MF_01358"/>
    </source>
</evidence>
<comment type="function">
    <text evidence="1">NDH-1 shuttles electrons from NADH, via FMN and iron-sulfur (Fe-S) centers, to quinones in the respiratory chain. The immediate electron acceptor for the enzyme in this species is believed to be ubiquinone. Couples the redox reaction to proton translocation (for every two electrons transferred, four hydrogen ions are translocated across the cytoplasmic membrane), and thus conserves the redox energy in a proton gradient.</text>
</comment>
<comment type="catalytic activity">
    <reaction evidence="1">
        <text>a quinone + NADH + 5 H(+)(in) = a quinol + NAD(+) + 4 H(+)(out)</text>
        <dbReference type="Rhea" id="RHEA:57888"/>
        <dbReference type="ChEBI" id="CHEBI:15378"/>
        <dbReference type="ChEBI" id="CHEBI:24646"/>
        <dbReference type="ChEBI" id="CHEBI:57540"/>
        <dbReference type="ChEBI" id="CHEBI:57945"/>
        <dbReference type="ChEBI" id="CHEBI:132124"/>
    </reaction>
</comment>
<comment type="subunit">
    <text evidence="1">NDH-1 is composed of 14 different subunits. Subunits NuoB, C, D, E, F, and G constitute the peripheral sector of the complex.</text>
</comment>
<comment type="subcellular location">
    <subcellularLocation>
        <location evidence="1">Cell inner membrane</location>
        <topology evidence="1">Peripheral membrane protein</topology>
        <orientation evidence="1">Cytoplasmic side</orientation>
    </subcellularLocation>
</comment>
<comment type="similarity">
    <text evidence="1">Belongs to the complex I 49 kDa subunit family.</text>
</comment>
<accession>Q6N5M5</accession>
<protein>
    <recommendedName>
        <fullName evidence="1">NADH-quinone oxidoreductase subunit D</fullName>
        <ecNumber evidence="1">7.1.1.-</ecNumber>
    </recommendedName>
    <alternativeName>
        <fullName evidence="1">NADH dehydrogenase I subunit D</fullName>
    </alternativeName>
    <alternativeName>
        <fullName evidence="1">NDH-1 subunit D</fullName>
    </alternativeName>
</protein>
<keyword id="KW-0997">Cell inner membrane</keyword>
<keyword id="KW-1003">Cell membrane</keyword>
<keyword id="KW-0472">Membrane</keyword>
<keyword id="KW-0520">NAD</keyword>
<keyword id="KW-0874">Quinone</keyword>
<keyword id="KW-1278">Translocase</keyword>
<keyword id="KW-0813">Transport</keyword>
<keyword id="KW-0830">Ubiquinone</keyword>
<reference key="1">
    <citation type="journal article" date="2004" name="Nat. Biotechnol.">
        <title>Complete genome sequence of the metabolically versatile photosynthetic bacterium Rhodopseudomonas palustris.</title>
        <authorList>
            <person name="Larimer F.W."/>
            <person name="Chain P."/>
            <person name="Hauser L."/>
            <person name="Lamerdin J.E."/>
            <person name="Malfatti S."/>
            <person name="Do L."/>
            <person name="Land M.L."/>
            <person name="Pelletier D.A."/>
            <person name="Beatty J.T."/>
            <person name="Lang A.S."/>
            <person name="Tabita F.R."/>
            <person name="Gibson J.L."/>
            <person name="Hanson T.E."/>
            <person name="Bobst C."/>
            <person name="Torres y Torres J.L."/>
            <person name="Peres C."/>
            <person name="Harrison F.H."/>
            <person name="Gibson J."/>
            <person name="Harwood C.S."/>
        </authorList>
    </citation>
    <scope>NUCLEOTIDE SEQUENCE [LARGE SCALE GENOMIC DNA]</scope>
    <source>
        <strain>ATCC BAA-98 / CGA009</strain>
    </source>
</reference>
<gene>
    <name evidence="1" type="primary">nuoD</name>
    <name type="ordered locus">RPA2949</name>
</gene>
<dbReference type="EC" id="7.1.1.-" evidence="1"/>
<dbReference type="EMBL" id="BX572602">
    <property type="protein sequence ID" value="CAE28390.1"/>
    <property type="molecule type" value="Genomic_DNA"/>
</dbReference>
<dbReference type="RefSeq" id="WP_011158498.1">
    <property type="nucleotide sequence ID" value="NZ_CP116810.1"/>
</dbReference>
<dbReference type="SMR" id="Q6N5M5"/>
<dbReference type="STRING" id="258594.RPA2949"/>
<dbReference type="GeneID" id="66894032"/>
<dbReference type="eggNOG" id="COG0649">
    <property type="taxonomic scope" value="Bacteria"/>
</dbReference>
<dbReference type="HOGENOM" id="CLU_015134_1_1_5"/>
<dbReference type="PhylomeDB" id="Q6N5M5"/>
<dbReference type="GO" id="GO:0005886">
    <property type="term" value="C:plasma membrane"/>
    <property type="evidence" value="ECO:0007669"/>
    <property type="project" value="UniProtKB-SubCell"/>
</dbReference>
<dbReference type="GO" id="GO:0051287">
    <property type="term" value="F:NAD binding"/>
    <property type="evidence" value="ECO:0007669"/>
    <property type="project" value="InterPro"/>
</dbReference>
<dbReference type="GO" id="GO:0050136">
    <property type="term" value="F:NADH:ubiquinone reductase (non-electrogenic) activity"/>
    <property type="evidence" value="ECO:0007669"/>
    <property type="project" value="UniProtKB-UniRule"/>
</dbReference>
<dbReference type="GO" id="GO:0048038">
    <property type="term" value="F:quinone binding"/>
    <property type="evidence" value="ECO:0007669"/>
    <property type="project" value="UniProtKB-KW"/>
</dbReference>
<dbReference type="FunFam" id="1.10.645.10:FF:000005">
    <property type="entry name" value="NADH-quinone oxidoreductase subunit D"/>
    <property type="match status" value="1"/>
</dbReference>
<dbReference type="Gene3D" id="1.10.645.10">
    <property type="entry name" value="Cytochrome-c3 Hydrogenase, chain B"/>
    <property type="match status" value="1"/>
</dbReference>
<dbReference type="HAMAP" id="MF_01358">
    <property type="entry name" value="NDH1_NuoD"/>
    <property type="match status" value="1"/>
</dbReference>
<dbReference type="InterPro" id="IPR001135">
    <property type="entry name" value="NADH_Q_OxRdtase_suD"/>
</dbReference>
<dbReference type="InterPro" id="IPR014029">
    <property type="entry name" value="NADH_UbQ_OxRdtase_49kDa_CS"/>
</dbReference>
<dbReference type="InterPro" id="IPR022885">
    <property type="entry name" value="NDH1_su_D/H"/>
</dbReference>
<dbReference type="InterPro" id="IPR029014">
    <property type="entry name" value="NiFe-Hase_large"/>
</dbReference>
<dbReference type="NCBIfam" id="TIGR01962">
    <property type="entry name" value="NuoD"/>
    <property type="match status" value="1"/>
</dbReference>
<dbReference type="NCBIfam" id="NF004739">
    <property type="entry name" value="PRK06075.1"/>
    <property type="match status" value="1"/>
</dbReference>
<dbReference type="PANTHER" id="PTHR11993:SF10">
    <property type="entry name" value="NADH DEHYDROGENASE [UBIQUINONE] IRON-SULFUR PROTEIN 2, MITOCHONDRIAL"/>
    <property type="match status" value="1"/>
</dbReference>
<dbReference type="PANTHER" id="PTHR11993">
    <property type="entry name" value="NADH-UBIQUINONE OXIDOREDUCTASE 49 KDA SUBUNIT"/>
    <property type="match status" value="1"/>
</dbReference>
<dbReference type="Pfam" id="PF00346">
    <property type="entry name" value="Complex1_49kDa"/>
    <property type="match status" value="1"/>
</dbReference>
<dbReference type="SUPFAM" id="SSF56762">
    <property type="entry name" value="HydB/Nqo4-like"/>
    <property type="match status" value="1"/>
</dbReference>
<dbReference type="PROSITE" id="PS00535">
    <property type="entry name" value="COMPLEX1_49K"/>
    <property type="match status" value="1"/>
</dbReference>
<name>NUOD_RHOPA</name>